<protein>
    <recommendedName>
        <fullName evidence="1">Small ribosomal subunit protein bS20</fullName>
    </recommendedName>
    <alternativeName>
        <fullName evidence="2">30S ribosomal protein S20</fullName>
    </alternativeName>
</protein>
<comment type="function">
    <text evidence="1">Binds directly to 16S ribosomal RNA.</text>
</comment>
<comment type="similarity">
    <text evidence="1">Belongs to the bacterial ribosomal protein bS20 family.</text>
</comment>
<gene>
    <name evidence="1" type="primary">rpsT</name>
    <name type="ordered locus">Mflv_2665</name>
</gene>
<accession>A4T2G0</accession>
<sequence>MANIKSQQKRILTNERRRLRNKSVKSSLHTAVRGFREAVESGDKEKAGELLLATSRKLDKAASKGVIHKNQAANRKSALARALNKI</sequence>
<name>RS20_MYCGI</name>
<proteinExistence type="inferred from homology"/>
<keyword id="KW-0687">Ribonucleoprotein</keyword>
<keyword id="KW-0689">Ribosomal protein</keyword>
<keyword id="KW-0694">RNA-binding</keyword>
<keyword id="KW-0699">rRNA-binding</keyword>
<evidence type="ECO:0000255" key="1">
    <source>
        <dbReference type="HAMAP-Rule" id="MF_00500"/>
    </source>
</evidence>
<evidence type="ECO:0000305" key="2"/>
<reference key="1">
    <citation type="submission" date="2007-04" db="EMBL/GenBank/DDBJ databases">
        <title>Complete sequence of chromosome of Mycobacterium gilvum PYR-GCK.</title>
        <authorList>
            <consortium name="US DOE Joint Genome Institute"/>
            <person name="Copeland A."/>
            <person name="Lucas S."/>
            <person name="Lapidus A."/>
            <person name="Barry K."/>
            <person name="Detter J.C."/>
            <person name="Glavina del Rio T."/>
            <person name="Hammon N."/>
            <person name="Israni S."/>
            <person name="Dalin E."/>
            <person name="Tice H."/>
            <person name="Pitluck S."/>
            <person name="Chain P."/>
            <person name="Malfatti S."/>
            <person name="Shin M."/>
            <person name="Vergez L."/>
            <person name="Schmutz J."/>
            <person name="Larimer F."/>
            <person name="Land M."/>
            <person name="Hauser L."/>
            <person name="Kyrpides N."/>
            <person name="Mikhailova N."/>
            <person name="Miller C."/>
            <person name="Richardson P."/>
        </authorList>
    </citation>
    <scope>NUCLEOTIDE SEQUENCE [LARGE SCALE GENOMIC DNA]</scope>
    <source>
        <strain>PYR-GCK</strain>
    </source>
</reference>
<feature type="chain" id="PRO_1000081437" description="Small ribosomal subunit protein bS20">
    <location>
        <begin position="1"/>
        <end position="86"/>
    </location>
</feature>
<organism>
    <name type="scientific">Mycolicibacterium gilvum (strain PYR-GCK)</name>
    <name type="common">Mycobacterium gilvum (strain PYR-GCK)</name>
    <dbReference type="NCBI Taxonomy" id="350054"/>
    <lineage>
        <taxon>Bacteria</taxon>
        <taxon>Bacillati</taxon>
        <taxon>Actinomycetota</taxon>
        <taxon>Actinomycetes</taxon>
        <taxon>Mycobacteriales</taxon>
        <taxon>Mycobacteriaceae</taxon>
        <taxon>Mycolicibacterium</taxon>
    </lineage>
</organism>
<dbReference type="EMBL" id="CP000656">
    <property type="protein sequence ID" value="ABP45142.1"/>
    <property type="molecule type" value="Genomic_DNA"/>
</dbReference>
<dbReference type="SMR" id="A4T2G0"/>
<dbReference type="STRING" id="350054.Mflv_2665"/>
<dbReference type="KEGG" id="mgi:Mflv_2665"/>
<dbReference type="eggNOG" id="COG0268">
    <property type="taxonomic scope" value="Bacteria"/>
</dbReference>
<dbReference type="HOGENOM" id="CLU_160655_0_1_11"/>
<dbReference type="OrthoDB" id="9807974at2"/>
<dbReference type="GO" id="GO:0005829">
    <property type="term" value="C:cytosol"/>
    <property type="evidence" value="ECO:0007669"/>
    <property type="project" value="TreeGrafter"/>
</dbReference>
<dbReference type="GO" id="GO:0015935">
    <property type="term" value="C:small ribosomal subunit"/>
    <property type="evidence" value="ECO:0007669"/>
    <property type="project" value="TreeGrafter"/>
</dbReference>
<dbReference type="GO" id="GO:0070181">
    <property type="term" value="F:small ribosomal subunit rRNA binding"/>
    <property type="evidence" value="ECO:0007669"/>
    <property type="project" value="TreeGrafter"/>
</dbReference>
<dbReference type="GO" id="GO:0003735">
    <property type="term" value="F:structural constituent of ribosome"/>
    <property type="evidence" value="ECO:0007669"/>
    <property type="project" value="InterPro"/>
</dbReference>
<dbReference type="GO" id="GO:0006412">
    <property type="term" value="P:translation"/>
    <property type="evidence" value="ECO:0007669"/>
    <property type="project" value="UniProtKB-UniRule"/>
</dbReference>
<dbReference type="FunFam" id="1.20.58.110:FF:000001">
    <property type="entry name" value="30S ribosomal protein S20"/>
    <property type="match status" value="1"/>
</dbReference>
<dbReference type="Gene3D" id="1.20.58.110">
    <property type="entry name" value="Ribosomal protein S20"/>
    <property type="match status" value="1"/>
</dbReference>
<dbReference type="HAMAP" id="MF_00500">
    <property type="entry name" value="Ribosomal_bS20"/>
    <property type="match status" value="1"/>
</dbReference>
<dbReference type="InterPro" id="IPR002583">
    <property type="entry name" value="Ribosomal_bS20"/>
</dbReference>
<dbReference type="InterPro" id="IPR036510">
    <property type="entry name" value="Ribosomal_bS20_sf"/>
</dbReference>
<dbReference type="NCBIfam" id="TIGR00029">
    <property type="entry name" value="S20"/>
    <property type="match status" value="1"/>
</dbReference>
<dbReference type="PANTHER" id="PTHR33398">
    <property type="entry name" value="30S RIBOSOMAL PROTEIN S20"/>
    <property type="match status" value="1"/>
</dbReference>
<dbReference type="PANTHER" id="PTHR33398:SF1">
    <property type="entry name" value="SMALL RIBOSOMAL SUBUNIT PROTEIN BS20C"/>
    <property type="match status" value="1"/>
</dbReference>
<dbReference type="Pfam" id="PF01649">
    <property type="entry name" value="Ribosomal_S20p"/>
    <property type="match status" value="1"/>
</dbReference>
<dbReference type="SUPFAM" id="SSF46992">
    <property type="entry name" value="Ribosomal protein S20"/>
    <property type="match status" value="1"/>
</dbReference>